<dbReference type="EMBL" id="AB000566">
    <property type="protein sequence ID" value="BAA34133.2"/>
    <property type="molecule type" value="Genomic_DNA"/>
</dbReference>
<dbReference type="EMBL" id="AB000567">
    <property type="protein sequence ID" value="BAA34134.2"/>
    <property type="molecule type" value="Genomic_DNA"/>
</dbReference>
<dbReference type="EMBL" id="AB000586">
    <property type="protein sequence ID" value="BAA34151.1"/>
    <property type="molecule type" value="Genomic_DNA"/>
</dbReference>
<dbReference type="EMBL" id="AB000587">
    <property type="protein sequence ID" value="BAA34152.1"/>
    <property type="molecule type" value="Genomic_DNA"/>
</dbReference>
<dbReference type="EMBL" id="AB000588">
    <property type="protein sequence ID" value="BAA34153.1"/>
    <property type="molecule type" value="Genomic_DNA"/>
</dbReference>
<dbReference type="EMBL" id="AB000589">
    <property type="protein sequence ID" value="BAA34154.1"/>
    <property type="molecule type" value="Genomic_DNA"/>
</dbReference>
<dbReference type="EMBL" id="AB000590">
    <property type="protein sequence ID" value="BAA34155.1"/>
    <property type="molecule type" value="Genomic_DNA"/>
</dbReference>
<dbReference type="EMBL" id="AB000591">
    <property type="protein sequence ID" value="BAA34156.1"/>
    <property type="molecule type" value="Genomic_DNA"/>
</dbReference>
<dbReference type="EMBL" id="AB000592">
    <property type="protein sequence ID" value="BAA34157.1"/>
    <property type="molecule type" value="Genomic_DNA"/>
</dbReference>
<dbReference type="EMBL" id="AB000593">
    <property type="protein sequence ID" value="BAA34158.1"/>
    <property type="molecule type" value="Genomic_DNA"/>
</dbReference>
<dbReference type="SMR" id="P56630"/>
<dbReference type="GO" id="GO:0005743">
    <property type="term" value="C:mitochondrial inner membrane"/>
    <property type="evidence" value="ECO:0007669"/>
    <property type="project" value="UniProtKB-SubCell"/>
</dbReference>
<dbReference type="GO" id="GO:0046872">
    <property type="term" value="F:metal ion binding"/>
    <property type="evidence" value="ECO:0007669"/>
    <property type="project" value="UniProtKB-KW"/>
</dbReference>
<dbReference type="GO" id="GO:0008121">
    <property type="term" value="F:ubiquinol-cytochrome-c reductase activity"/>
    <property type="evidence" value="ECO:0007669"/>
    <property type="project" value="TreeGrafter"/>
</dbReference>
<dbReference type="GO" id="GO:0006122">
    <property type="term" value="P:mitochondrial electron transport, ubiquinol to cytochrome c"/>
    <property type="evidence" value="ECO:0007669"/>
    <property type="project" value="TreeGrafter"/>
</dbReference>
<dbReference type="Gene3D" id="1.20.810.10">
    <property type="entry name" value="Cytochrome Bc1 Complex, Chain C"/>
    <property type="match status" value="1"/>
</dbReference>
<dbReference type="InterPro" id="IPR005798">
    <property type="entry name" value="Cyt_b/b6_C"/>
</dbReference>
<dbReference type="InterPro" id="IPR036150">
    <property type="entry name" value="Cyt_b/b6_C_sf"/>
</dbReference>
<dbReference type="InterPro" id="IPR005797">
    <property type="entry name" value="Cyt_b/b6_N"/>
</dbReference>
<dbReference type="InterPro" id="IPR027387">
    <property type="entry name" value="Cytb/b6-like_sf"/>
</dbReference>
<dbReference type="InterPro" id="IPR016174">
    <property type="entry name" value="Di-haem_cyt_TM"/>
</dbReference>
<dbReference type="PANTHER" id="PTHR19271">
    <property type="entry name" value="CYTOCHROME B"/>
    <property type="match status" value="1"/>
</dbReference>
<dbReference type="PANTHER" id="PTHR19271:SF16">
    <property type="entry name" value="CYTOCHROME B"/>
    <property type="match status" value="1"/>
</dbReference>
<dbReference type="Pfam" id="PF00032">
    <property type="entry name" value="Cytochrom_B_C"/>
    <property type="match status" value="1"/>
</dbReference>
<dbReference type="Pfam" id="PF00033">
    <property type="entry name" value="Cytochrome_B"/>
    <property type="match status" value="1"/>
</dbReference>
<dbReference type="SUPFAM" id="SSF81648">
    <property type="entry name" value="a domain/subunit of cytochrome bc1 complex (Ubiquinol-cytochrome c reductase)"/>
    <property type="match status" value="1"/>
</dbReference>
<dbReference type="SUPFAM" id="SSF81342">
    <property type="entry name" value="Transmembrane di-heme cytochromes"/>
    <property type="match status" value="1"/>
</dbReference>
<dbReference type="PROSITE" id="PS51003">
    <property type="entry name" value="CYTB_CTER"/>
    <property type="match status" value="1"/>
</dbReference>
<dbReference type="PROSITE" id="PS51002">
    <property type="entry name" value="CYTB_NTER"/>
    <property type="match status" value="1"/>
</dbReference>
<comment type="function">
    <text evidence="3">Component of the ubiquinol-cytochrome c reductase complex (complex III or cytochrome b-c1 complex) that is part of the mitochondrial respiratory chain. The b-c1 complex mediates electron transfer from ubiquinol to cytochrome c. Contributes to the generation of a proton gradient across the mitochondrial membrane that is then used for ATP synthesis.</text>
</comment>
<comment type="cofactor">
    <cofactor evidence="3">
        <name>heme b</name>
        <dbReference type="ChEBI" id="CHEBI:60344"/>
    </cofactor>
    <text evidence="3">Binds 2 heme b groups non-covalently.</text>
</comment>
<comment type="subunit">
    <text evidence="3">Fungal cytochrome b-c1 complex contains 10 subunits; 3 respiratory subunits, 2 core proteins and 5 low-molecular weight proteins. Cytochrome b-c1 complex is a homodimer.</text>
</comment>
<comment type="subcellular location">
    <subcellularLocation>
        <location evidence="3">Mitochondrion inner membrane</location>
        <topology evidence="3">Multi-pass membrane protein</topology>
    </subcellularLocation>
</comment>
<comment type="miscellaneous">
    <text evidence="1">Heme 1 (or BL or b562) is low-potential and absorbs at about 562 nm, and heme 2 (or BH or b566) is high-potential and absorbs at about 566 nm.</text>
</comment>
<comment type="similarity">
    <text evidence="4 5">Belongs to the cytochrome b family.</text>
</comment>
<comment type="caution">
    <text evidence="3">The protein contains only eight transmembrane helices, not nine as predicted by bioinformatics tools.</text>
</comment>
<proteinExistence type="inferred from homology"/>
<geneLocation type="mitochondrion"/>
<evidence type="ECO:0000250" key="1"/>
<evidence type="ECO:0000250" key="2">
    <source>
        <dbReference type="UniProtKB" id="P00157"/>
    </source>
</evidence>
<evidence type="ECO:0000250" key="3">
    <source>
        <dbReference type="UniProtKB" id="P00163"/>
    </source>
</evidence>
<evidence type="ECO:0000255" key="4">
    <source>
        <dbReference type="PROSITE-ProRule" id="PRU00967"/>
    </source>
</evidence>
<evidence type="ECO:0000255" key="5">
    <source>
        <dbReference type="PROSITE-ProRule" id="PRU00968"/>
    </source>
</evidence>
<feature type="chain" id="PRO_0000061736" description="Cytochrome b">
    <location>
        <begin position="1" status="less than"/>
        <end position="145" status="greater than"/>
    </location>
</feature>
<feature type="transmembrane region" description="Helical" evidence="3">
    <location>
        <begin position="38"/>
        <end position="58"/>
    </location>
</feature>
<feature type="transmembrane region" description="Helical" evidence="3">
    <location>
        <begin position="85"/>
        <end position="105"/>
    </location>
</feature>
<feature type="binding site" description="axial binding residue" evidence="5">
    <location>
        <position position="42"/>
    </location>
    <ligand>
        <name>heme b</name>
        <dbReference type="ChEBI" id="CHEBI:60344"/>
        <label>b562</label>
    </ligand>
    <ligandPart>
        <name>Fe</name>
        <dbReference type="ChEBI" id="CHEBI:18248"/>
    </ligandPart>
</feature>
<feature type="binding site" description="axial binding residue" evidence="5">
    <location>
        <position position="56"/>
    </location>
    <ligand>
        <name>heme b</name>
        <dbReference type="ChEBI" id="CHEBI:60344"/>
        <label>b566</label>
    </ligand>
    <ligandPart>
        <name>Fe</name>
        <dbReference type="ChEBI" id="CHEBI:18248"/>
    </ligandPart>
</feature>
<feature type="binding site" evidence="2">
    <location>
        <position position="61"/>
    </location>
    <ligand>
        <name>a ubiquinone</name>
        <dbReference type="ChEBI" id="CHEBI:16389"/>
    </ligand>
</feature>
<feature type="non-terminal residue">
    <location>
        <position position="1"/>
    </location>
</feature>
<feature type="non-terminal residue">
    <location>
        <position position="145"/>
    </location>
</feature>
<sequence>WGATVITNLMSAIPWIGQDIVEFIWGGFSVNNATLNRFFALHFLLPFVLAALVIMHLIAMHDTVGSGNPLGISGNYDRLPFAPYFVFKDLVTVFIFFIVLSVFVFFMPNALGDSENYVMANPMQTPPAIVPEWYLLPFYAILRSI</sequence>
<accession>P56630</accession>
<reference key="1">
    <citation type="journal article" date="1998" name="Med. Mycol.">
        <title>The identification and phylogenetic relationship of pathogenic species of Aspergillus based on the mitochondrial cytochrome b gene.</title>
        <authorList>
            <person name="Wang L."/>
            <person name="Yokoyama K."/>
            <person name="Miyaji M."/>
            <person name="Nishimura K."/>
        </authorList>
    </citation>
    <scope>NUCLEOTIDE SEQUENCE [GENOMIC DNA]</scope>
    <source>
        <strain>IFM 40804</strain>
        <strain>IFM 40806</strain>
        <strain>IFM 40807</strain>
        <strain>IFM 40819</strain>
        <strain>IFM 41206</strain>
        <strain>IFM 41392</strain>
        <strain>IFM 45916</strain>
        <strain>IFM 45917</strain>
        <strain>IFM 46890</strain>
        <strain>IFM 5355</strain>
    </source>
</reference>
<gene>
    <name type="primary">cob</name>
    <name type="synonym">cytB</name>
</gene>
<protein>
    <recommendedName>
        <fullName>Cytochrome b</fullName>
    </recommendedName>
    <alternativeName>
        <fullName>Complex III subunit 3</fullName>
    </alternativeName>
    <alternativeName>
        <fullName>Complex III subunit III</fullName>
    </alternativeName>
    <alternativeName>
        <fullName>Cytochrome b-c1 complex subunit 3</fullName>
    </alternativeName>
    <alternativeName>
        <fullName>Ubiquinol-cytochrome-c reductase complex cytochrome b subunit</fullName>
    </alternativeName>
</protein>
<organism>
    <name type="scientific">Aspergillus fumigatus</name>
    <name type="common">Neosartorya fumigata</name>
    <dbReference type="NCBI Taxonomy" id="746128"/>
    <lineage>
        <taxon>Eukaryota</taxon>
        <taxon>Fungi</taxon>
        <taxon>Dikarya</taxon>
        <taxon>Ascomycota</taxon>
        <taxon>Pezizomycotina</taxon>
        <taxon>Eurotiomycetes</taxon>
        <taxon>Eurotiomycetidae</taxon>
        <taxon>Eurotiales</taxon>
        <taxon>Aspergillaceae</taxon>
        <taxon>Aspergillus</taxon>
        <taxon>Aspergillus subgen. Fumigati</taxon>
    </lineage>
</organism>
<keyword id="KW-0249">Electron transport</keyword>
<keyword id="KW-0349">Heme</keyword>
<keyword id="KW-0408">Iron</keyword>
<keyword id="KW-0472">Membrane</keyword>
<keyword id="KW-0479">Metal-binding</keyword>
<keyword id="KW-0496">Mitochondrion</keyword>
<keyword id="KW-0999">Mitochondrion inner membrane</keyword>
<keyword id="KW-0679">Respiratory chain</keyword>
<keyword id="KW-0812">Transmembrane</keyword>
<keyword id="KW-1133">Transmembrane helix</keyword>
<keyword id="KW-0813">Transport</keyword>
<keyword id="KW-0830">Ubiquinone</keyword>
<name>CYB_ASPFM</name>